<name>DCTN5_HUMAN</name>
<protein>
    <recommendedName>
        <fullName>Dynactin subunit 5</fullName>
    </recommendedName>
    <alternativeName>
        <fullName>Dynactin subunit p25</fullName>
    </alternativeName>
</protein>
<evidence type="ECO:0000250" key="1">
    <source>
        <dbReference type="UniProtKB" id="A0A286ZK88"/>
    </source>
</evidence>
<evidence type="ECO:0000250" key="2">
    <source>
        <dbReference type="UniProtKB" id="Q9QZB9"/>
    </source>
</evidence>
<evidence type="ECO:0000269" key="3">
    <source>
    </source>
</evidence>
<evidence type="ECO:0000303" key="4">
    <source>
    </source>
</evidence>
<evidence type="ECO:0000305" key="5"/>
<evidence type="ECO:0000312" key="6">
    <source>
        <dbReference type="HGNC" id="HGNC:24594"/>
    </source>
</evidence>
<evidence type="ECO:0007744" key="7">
    <source>
    </source>
</evidence>
<evidence type="ECO:0007744" key="8">
    <source>
    </source>
</evidence>
<keyword id="KW-0002">3D-structure</keyword>
<keyword id="KW-0007">Acetylation</keyword>
<keyword id="KW-0025">Alternative splicing</keyword>
<keyword id="KW-0137">Centromere</keyword>
<keyword id="KW-0158">Chromosome</keyword>
<keyword id="KW-0963">Cytoplasm</keyword>
<keyword id="KW-0206">Cytoskeleton</keyword>
<keyword id="KW-0995">Kinetochore</keyword>
<keyword id="KW-1267">Proteomics identification</keyword>
<keyword id="KW-1185">Reference proteome</keyword>
<accession>Q9BTE1</accession>
<accession>A8K9X8</accession>
<accession>H3BN51</accession>
<accession>H3BQA4</accession>
<reference key="1">
    <citation type="journal article" date="2004" name="Nat. Genet.">
        <title>Complete sequencing and characterization of 21,243 full-length human cDNAs.</title>
        <authorList>
            <person name="Ota T."/>
            <person name="Suzuki Y."/>
            <person name="Nishikawa T."/>
            <person name="Otsuki T."/>
            <person name="Sugiyama T."/>
            <person name="Irie R."/>
            <person name="Wakamatsu A."/>
            <person name="Hayashi K."/>
            <person name="Sato H."/>
            <person name="Nagai K."/>
            <person name="Kimura K."/>
            <person name="Makita H."/>
            <person name="Sekine M."/>
            <person name="Obayashi M."/>
            <person name="Nishi T."/>
            <person name="Shibahara T."/>
            <person name="Tanaka T."/>
            <person name="Ishii S."/>
            <person name="Yamamoto J."/>
            <person name="Saito K."/>
            <person name="Kawai Y."/>
            <person name="Isono Y."/>
            <person name="Nakamura Y."/>
            <person name="Nagahari K."/>
            <person name="Murakami K."/>
            <person name="Yasuda T."/>
            <person name="Iwayanagi T."/>
            <person name="Wagatsuma M."/>
            <person name="Shiratori A."/>
            <person name="Sudo H."/>
            <person name="Hosoiri T."/>
            <person name="Kaku Y."/>
            <person name="Kodaira H."/>
            <person name="Kondo H."/>
            <person name="Sugawara M."/>
            <person name="Takahashi M."/>
            <person name="Kanda K."/>
            <person name="Yokoi T."/>
            <person name="Furuya T."/>
            <person name="Kikkawa E."/>
            <person name="Omura Y."/>
            <person name="Abe K."/>
            <person name="Kamihara K."/>
            <person name="Katsuta N."/>
            <person name="Sato K."/>
            <person name="Tanikawa M."/>
            <person name="Yamazaki M."/>
            <person name="Ninomiya K."/>
            <person name="Ishibashi T."/>
            <person name="Yamashita H."/>
            <person name="Murakawa K."/>
            <person name="Fujimori K."/>
            <person name="Tanai H."/>
            <person name="Kimata M."/>
            <person name="Watanabe M."/>
            <person name="Hiraoka S."/>
            <person name="Chiba Y."/>
            <person name="Ishida S."/>
            <person name="Ono Y."/>
            <person name="Takiguchi S."/>
            <person name="Watanabe S."/>
            <person name="Yosida M."/>
            <person name="Hotuta T."/>
            <person name="Kusano J."/>
            <person name="Kanehori K."/>
            <person name="Takahashi-Fujii A."/>
            <person name="Hara H."/>
            <person name="Tanase T.-O."/>
            <person name="Nomura Y."/>
            <person name="Togiya S."/>
            <person name="Komai F."/>
            <person name="Hara R."/>
            <person name="Takeuchi K."/>
            <person name="Arita M."/>
            <person name="Imose N."/>
            <person name="Musashino K."/>
            <person name="Yuuki H."/>
            <person name="Oshima A."/>
            <person name="Sasaki N."/>
            <person name="Aotsuka S."/>
            <person name="Yoshikawa Y."/>
            <person name="Matsunawa H."/>
            <person name="Ichihara T."/>
            <person name="Shiohata N."/>
            <person name="Sano S."/>
            <person name="Moriya S."/>
            <person name="Momiyama H."/>
            <person name="Satoh N."/>
            <person name="Takami S."/>
            <person name="Terashima Y."/>
            <person name="Suzuki O."/>
            <person name="Nakagawa S."/>
            <person name="Senoh A."/>
            <person name="Mizoguchi H."/>
            <person name="Goto Y."/>
            <person name="Shimizu F."/>
            <person name="Wakebe H."/>
            <person name="Hishigaki H."/>
            <person name="Watanabe T."/>
            <person name="Sugiyama A."/>
            <person name="Takemoto M."/>
            <person name="Kawakami B."/>
            <person name="Yamazaki M."/>
            <person name="Watanabe K."/>
            <person name="Kumagai A."/>
            <person name="Itakura S."/>
            <person name="Fukuzumi Y."/>
            <person name="Fujimori Y."/>
            <person name="Komiyama M."/>
            <person name="Tashiro H."/>
            <person name="Tanigami A."/>
            <person name="Fujiwara T."/>
            <person name="Ono T."/>
            <person name="Yamada K."/>
            <person name="Fujii Y."/>
            <person name="Ozaki K."/>
            <person name="Hirao M."/>
            <person name="Ohmori Y."/>
            <person name="Kawabata A."/>
            <person name="Hikiji T."/>
            <person name="Kobatake N."/>
            <person name="Inagaki H."/>
            <person name="Ikema Y."/>
            <person name="Okamoto S."/>
            <person name="Okitani R."/>
            <person name="Kawakami T."/>
            <person name="Noguchi S."/>
            <person name="Itoh T."/>
            <person name="Shigeta K."/>
            <person name="Senba T."/>
            <person name="Matsumura K."/>
            <person name="Nakajima Y."/>
            <person name="Mizuno T."/>
            <person name="Morinaga M."/>
            <person name="Sasaki M."/>
            <person name="Togashi T."/>
            <person name="Oyama M."/>
            <person name="Hata H."/>
            <person name="Watanabe M."/>
            <person name="Komatsu T."/>
            <person name="Mizushima-Sugano J."/>
            <person name="Satoh T."/>
            <person name="Shirai Y."/>
            <person name="Takahashi Y."/>
            <person name="Nakagawa K."/>
            <person name="Okumura K."/>
            <person name="Nagase T."/>
            <person name="Nomura N."/>
            <person name="Kikuchi H."/>
            <person name="Masuho Y."/>
            <person name="Yamashita R."/>
            <person name="Nakai K."/>
            <person name="Yada T."/>
            <person name="Nakamura Y."/>
            <person name="Ohara O."/>
            <person name="Isogai T."/>
            <person name="Sugano S."/>
        </authorList>
    </citation>
    <scope>NUCLEOTIDE SEQUENCE [LARGE SCALE MRNA] (ISOFORM 1)</scope>
    <source>
        <tissue>Mammary gland</tissue>
        <tissue>Trachea</tissue>
    </source>
</reference>
<reference key="2">
    <citation type="journal article" date="2004" name="Nature">
        <title>The sequence and analysis of duplication-rich human chromosome 16.</title>
        <authorList>
            <person name="Martin J."/>
            <person name="Han C."/>
            <person name="Gordon L.A."/>
            <person name="Terry A."/>
            <person name="Prabhakar S."/>
            <person name="She X."/>
            <person name="Xie G."/>
            <person name="Hellsten U."/>
            <person name="Chan Y.M."/>
            <person name="Altherr M."/>
            <person name="Couronne O."/>
            <person name="Aerts A."/>
            <person name="Bajorek E."/>
            <person name="Black S."/>
            <person name="Blumer H."/>
            <person name="Branscomb E."/>
            <person name="Brown N.C."/>
            <person name="Bruno W.J."/>
            <person name="Buckingham J.M."/>
            <person name="Callen D.F."/>
            <person name="Campbell C.S."/>
            <person name="Campbell M.L."/>
            <person name="Campbell E.W."/>
            <person name="Caoile C."/>
            <person name="Challacombe J.F."/>
            <person name="Chasteen L.A."/>
            <person name="Chertkov O."/>
            <person name="Chi H.C."/>
            <person name="Christensen M."/>
            <person name="Clark L.M."/>
            <person name="Cohn J.D."/>
            <person name="Denys M."/>
            <person name="Detter J.C."/>
            <person name="Dickson M."/>
            <person name="Dimitrijevic-Bussod M."/>
            <person name="Escobar J."/>
            <person name="Fawcett J.J."/>
            <person name="Flowers D."/>
            <person name="Fotopulos D."/>
            <person name="Glavina T."/>
            <person name="Gomez M."/>
            <person name="Gonzales E."/>
            <person name="Goodstein D."/>
            <person name="Goodwin L.A."/>
            <person name="Grady D.L."/>
            <person name="Grigoriev I."/>
            <person name="Groza M."/>
            <person name="Hammon N."/>
            <person name="Hawkins T."/>
            <person name="Haydu L."/>
            <person name="Hildebrand C.E."/>
            <person name="Huang W."/>
            <person name="Israni S."/>
            <person name="Jett J."/>
            <person name="Jewett P.B."/>
            <person name="Kadner K."/>
            <person name="Kimball H."/>
            <person name="Kobayashi A."/>
            <person name="Krawczyk M.-C."/>
            <person name="Leyba T."/>
            <person name="Longmire J.L."/>
            <person name="Lopez F."/>
            <person name="Lou Y."/>
            <person name="Lowry S."/>
            <person name="Ludeman T."/>
            <person name="Manohar C.F."/>
            <person name="Mark G.A."/>
            <person name="McMurray K.L."/>
            <person name="Meincke L.J."/>
            <person name="Morgan J."/>
            <person name="Moyzis R.K."/>
            <person name="Mundt M.O."/>
            <person name="Munk A.C."/>
            <person name="Nandkeshwar R.D."/>
            <person name="Pitluck S."/>
            <person name="Pollard M."/>
            <person name="Predki P."/>
            <person name="Parson-Quintana B."/>
            <person name="Ramirez L."/>
            <person name="Rash S."/>
            <person name="Retterer J."/>
            <person name="Ricke D.O."/>
            <person name="Robinson D.L."/>
            <person name="Rodriguez A."/>
            <person name="Salamov A."/>
            <person name="Saunders E.H."/>
            <person name="Scott D."/>
            <person name="Shough T."/>
            <person name="Stallings R.L."/>
            <person name="Stalvey M."/>
            <person name="Sutherland R.D."/>
            <person name="Tapia R."/>
            <person name="Tesmer J.G."/>
            <person name="Thayer N."/>
            <person name="Thompson L.S."/>
            <person name="Tice H."/>
            <person name="Torney D.C."/>
            <person name="Tran-Gyamfi M."/>
            <person name="Tsai M."/>
            <person name="Ulanovsky L.E."/>
            <person name="Ustaszewska A."/>
            <person name="Vo N."/>
            <person name="White P.S."/>
            <person name="Williams A.L."/>
            <person name="Wills P.L."/>
            <person name="Wu J.-R."/>
            <person name="Wu K."/>
            <person name="Yang J."/>
            <person name="DeJong P."/>
            <person name="Bruce D."/>
            <person name="Doggett N.A."/>
            <person name="Deaven L."/>
            <person name="Schmutz J."/>
            <person name="Grimwood J."/>
            <person name="Richardson P."/>
            <person name="Rokhsar D.S."/>
            <person name="Eichler E.E."/>
            <person name="Gilna P."/>
            <person name="Lucas S.M."/>
            <person name="Myers R.M."/>
            <person name="Rubin E.M."/>
            <person name="Pennacchio L.A."/>
        </authorList>
    </citation>
    <scope>NUCLEOTIDE SEQUENCE [LARGE SCALE GENOMIC DNA]</scope>
</reference>
<reference key="3">
    <citation type="submission" date="2005-09" db="EMBL/GenBank/DDBJ databases">
        <authorList>
            <person name="Mural R.J."/>
            <person name="Istrail S."/>
            <person name="Sutton G.G."/>
            <person name="Florea L."/>
            <person name="Halpern A.L."/>
            <person name="Mobarry C.M."/>
            <person name="Lippert R."/>
            <person name="Walenz B."/>
            <person name="Shatkay H."/>
            <person name="Dew I."/>
            <person name="Miller J.R."/>
            <person name="Flanigan M.J."/>
            <person name="Edwards N.J."/>
            <person name="Bolanos R."/>
            <person name="Fasulo D."/>
            <person name="Halldorsson B.V."/>
            <person name="Hannenhalli S."/>
            <person name="Turner R."/>
            <person name="Yooseph S."/>
            <person name="Lu F."/>
            <person name="Nusskern D.R."/>
            <person name="Shue B.C."/>
            <person name="Zheng X.H."/>
            <person name="Zhong F."/>
            <person name="Delcher A.L."/>
            <person name="Huson D.H."/>
            <person name="Kravitz S.A."/>
            <person name="Mouchard L."/>
            <person name="Reinert K."/>
            <person name="Remington K.A."/>
            <person name="Clark A.G."/>
            <person name="Waterman M.S."/>
            <person name="Eichler E.E."/>
            <person name="Adams M.D."/>
            <person name="Hunkapiller M.W."/>
            <person name="Myers E.W."/>
            <person name="Venter J.C."/>
        </authorList>
    </citation>
    <scope>NUCLEOTIDE SEQUENCE [LARGE SCALE GENOMIC DNA]</scope>
</reference>
<reference key="4">
    <citation type="journal article" date="2004" name="Genome Res.">
        <title>The status, quality, and expansion of the NIH full-length cDNA project: the Mammalian Gene Collection (MGC).</title>
        <authorList>
            <consortium name="The MGC Project Team"/>
        </authorList>
    </citation>
    <scope>NUCLEOTIDE SEQUENCE [LARGE SCALE MRNA] (ISOFORMS 1 AND 2)</scope>
    <source>
        <tissue>Kidney</tissue>
        <tissue>Trophoblast</tissue>
    </source>
</reference>
<reference key="5">
    <citation type="journal article" date="2003" name="Nature">
        <title>Proteomic characterization of the human centrosome by protein correlation profiling.</title>
        <authorList>
            <person name="Andersen J.S."/>
            <person name="Wilkinson C.J."/>
            <person name="Mayor T."/>
            <person name="Mortensen P."/>
            <person name="Nigg E.A."/>
            <person name="Mann M."/>
        </authorList>
    </citation>
    <scope>IDENTIFICATION BY MASS SPECTROMETRY</scope>
    <source>
        <tissue>Lymphoblast</tissue>
    </source>
</reference>
<reference key="6">
    <citation type="journal article" date="2011" name="BMC Syst. Biol.">
        <title>Initial characterization of the human central proteome.</title>
        <authorList>
            <person name="Burkard T.R."/>
            <person name="Planyavsky M."/>
            <person name="Kaupe I."/>
            <person name="Breitwieser F.P."/>
            <person name="Buerckstuemmer T."/>
            <person name="Bennett K.L."/>
            <person name="Superti-Furga G."/>
            <person name="Colinge J."/>
        </authorList>
    </citation>
    <scope>IDENTIFICATION BY MASS SPECTROMETRY [LARGE SCALE ANALYSIS]</scope>
</reference>
<reference key="7">
    <citation type="journal article" date="2012" name="Mol. Cell. Proteomics">
        <title>Comparative large-scale characterisation of plant vs. mammal proteins reveals similar and idiosyncratic N-alpha acetylation features.</title>
        <authorList>
            <person name="Bienvenut W.V."/>
            <person name="Sumpton D."/>
            <person name="Martinez A."/>
            <person name="Lilla S."/>
            <person name="Espagne C."/>
            <person name="Meinnel T."/>
            <person name="Giglione C."/>
        </authorList>
    </citation>
    <scope>ACETYLATION [LARGE SCALE ANALYSIS] AT MET-1</scope>
    <scope>IDENTIFICATION BY MASS SPECTROMETRY [LARGE SCALE ANALYSIS]</scope>
</reference>
<reference key="8">
    <citation type="journal article" date="2012" name="Proc. Natl. Acad. Sci. U.S.A.">
        <title>N-terminal acetylome analyses and functional insights of the N-terminal acetyltransferase NatB.</title>
        <authorList>
            <person name="Van Damme P."/>
            <person name="Lasa M."/>
            <person name="Polevoda B."/>
            <person name="Gazquez C."/>
            <person name="Elosegui-Artola A."/>
            <person name="Kim D.S."/>
            <person name="De Juan-Pardo E."/>
            <person name="Demeyer K."/>
            <person name="Hole K."/>
            <person name="Larrea E."/>
            <person name="Timmerman E."/>
            <person name="Prieto J."/>
            <person name="Arnesen T."/>
            <person name="Sherman F."/>
            <person name="Gevaert K."/>
            <person name="Aldabe R."/>
        </authorList>
    </citation>
    <scope>ACETYLATION [LARGE SCALE ANALYSIS] AT MET-1</scope>
    <scope>IDENTIFICATION BY MASS SPECTROMETRY [LARGE SCALE ANALYSIS]</scope>
</reference>
<reference key="9">
    <citation type="journal article" date="2013" name="EMBO J.">
        <title>Dynactin helps target Polo-like kinase 1 to kinetochores via its left-handed beta-helical p27 subunit.</title>
        <authorList>
            <person name="Yeh T.Y."/>
            <person name="Kowalska A.K."/>
            <person name="Scipioni B.R."/>
            <person name="Cheong F.K."/>
            <person name="Zheng M."/>
            <person name="Derewenda U."/>
            <person name="Derewenda Z.S."/>
            <person name="Schroer T.A."/>
        </authorList>
    </citation>
    <scope>SUBUNIT</scope>
    <scope>SUBCELLULAR LOCATION</scope>
</reference>
<comment type="function">
    <text evidence="3">Part of the dynactin complex that activates the molecular motor dynein for ultra-processive transport along microtubules.</text>
</comment>
<comment type="subunit">
    <text evidence="1 2 3">Subunit of dynactin, a multiprotein complex part of a tripartite complex with dynein and a adapter, such as BICDL1, BICD2 or HOOK3 (PubMed:23455152). The dynactin complex is built around ACTR1A/ACTB filament and consists of an actin-related filament composed of a shoulder domain, a pointed end and a barbed end. Its length is defined by its flexible shoulder domain. The soulder is composed of 2 DCTN1 subunits, 4 DCTN2 and 2 DCTN3. The 4 DCNT2 (via N-terminus) bind the ACTR1A filament and act as molecular rulers to determine the length. The pointed end is important for binding dynein-dynactin cargo adapters. Consists of 4 subunits: ACTR10, DCNT4, DCTN5 and DCTN6. Within the complex DCTN6 forms a heterodimer with DCTN5 (PubMed:23455152). The barbed end is composed of a CAPZA1:CAPZB heterodimers, which binds ACTR1A/ACTB filament and dynactin and stabilizes dynactin (By similarity). Interacts with N4BP2L1 (By similarity).</text>
</comment>
<comment type="interaction">
    <interactant intactId="EBI-747324">
        <id>Q9BTE1</id>
    </interactant>
    <interactant intactId="EBI-349105">
        <id>P63167</id>
        <label>DYNLL1</label>
    </interactant>
    <organismsDiffer>false</organismsDiffer>
    <experiments>3</experiments>
</comment>
<comment type="interaction">
    <interactant intactId="EBI-747324">
        <id>Q9BTE1</id>
    </interactant>
    <interactant intactId="EBI-743099">
        <id>Q969F0</id>
        <label>FATE1</label>
    </interactant>
    <organismsDiffer>false</organismsDiffer>
    <experiments>3</experiments>
</comment>
<comment type="interaction">
    <interactant intactId="EBI-747324">
        <id>Q9BTE1</id>
    </interactant>
    <interactant intactId="EBI-740322">
        <id>Q93062</id>
        <label>RBPMS</label>
    </interactant>
    <organismsDiffer>false</organismsDiffer>
    <experiments>3</experiments>
</comment>
<comment type="subcellular location">
    <subcellularLocation>
        <location evidence="1">Cytoplasm</location>
        <location evidence="1">Cytoskeleton</location>
    </subcellularLocation>
    <subcellularLocation>
        <location evidence="3">Chromosome</location>
        <location evidence="3">Centromere</location>
        <location evidence="3">Kinetochore</location>
    </subcellularLocation>
</comment>
<comment type="alternative products">
    <event type="alternative splicing"/>
    <isoform>
        <id>Q9BTE1-1</id>
        <name>1</name>
        <sequence type="displayed"/>
    </isoform>
    <isoform>
        <id>Q9BTE1-2</id>
        <name>2</name>
        <sequence type="described" ref="VSP_046023"/>
    </isoform>
    <isoform>
        <id>Q9BTE1-3</id>
        <name>3</name>
        <sequence type="described" ref="VSP_046697"/>
    </isoform>
</comment>
<comment type="similarity">
    <text evidence="5">Belongs to the dynactin subunits 5/6 family. Dynactin subunit 5 subfamily.</text>
</comment>
<sequence length="182" mass="20127">MELGELLYNKSEYIETASGNKVSRQSVLCGSQNIVLNGKTIVMNDCIIRGDLANVRVGRHCVVKSRSVIRPPFKKFSKGVAFFPLHIGDHVFIEEDCVVNAAQIGSYVHVGKNCVIGRRCVLKDCCKILDNTVLPPETVVPPFTVFSGCPGLFSGELPECTQELMIDVTKSYYQKFLPLTQV</sequence>
<proteinExistence type="evidence at protein level"/>
<dbReference type="EMBL" id="AK027387">
    <property type="protein sequence ID" value="BAB55077.1"/>
    <property type="molecule type" value="mRNA"/>
</dbReference>
<dbReference type="EMBL" id="AK292843">
    <property type="protein sequence ID" value="BAF85532.1"/>
    <property type="molecule type" value="mRNA"/>
</dbReference>
<dbReference type="EMBL" id="AC008870">
    <property type="status" value="NOT_ANNOTATED_CDS"/>
    <property type="molecule type" value="Genomic_DNA"/>
</dbReference>
<dbReference type="EMBL" id="CH471145">
    <property type="protein sequence ID" value="EAW55809.1"/>
    <property type="molecule type" value="Genomic_DNA"/>
</dbReference>
<dbReference type="EMBL" id="CH471145">
    <property type="protein sequence ID" value="EAW55810.1"/>
    <property type="molecule type" value="Genomic_DNA"/>
</dbReference>
<dbReference type="EMBL" id="BC004191">
    <property type="protein sequence ID" value="AAH04191.1"/>
    <property type="molecule type" value="mRNA"/>
</dbReference>
<dbReference type="EMBL" id="CD388246">
    <property type="status" value="NOT_ANNOTATED_CDS"/>
    <property type="molecule type" value="mRNA"/>
</dbReference>
<dbReference type="CCDS" id="CCDS10615.1">
    <molecule id="Q9BTE1-1"/>
</dbReference>
<dbReference type="CCDS" id="CCDS58435.1">
    <molecule id="Q9BTE1-3"/>
</dbReference>
<dbReference type="CCDS" id="CCDS58436.1">
    <molecule id="Q9BTE1-2"/>
</dbReference>
<dbReference type="RefSeq" id="NP_001185940.1">
    <molecule id="Q9BTE1-3"/>
    <property type="nucleotide sequence ID" value="NM_001199011.2"/>
</dbReference>
<dbReference type="RefSeq" id="NP_001186672.1">
    <molecule id="Q9BTE1-2"/>
    <property type="nucleotide sequence ID" value="NM_001199743.2"/>
</dbReference>
<dbReference type="RefSeq" id="NP_115875.1">
    <molecule id="Q9BTE1-1"/>
    <property type="nucleotide sequence ID" value="NM_032486.4"/>
</dbReference>
<dbReference type="PDB" id="5NW4">
    <property type="method" value="EM"/>
    <property type="resolution" value="8.70 A"/>
    <property type="chains" value="h=1-182"/>
</dbReference>
<dbReference type="PDBsum" id="5NW4"/>
<dbReference type="EMDB" id="EMD-3706"/>
<dbReference type="SMR" id="Q9BTE1"/>
<dbReference type="BioGRID" id="124110">
    <property type="interactions" value="98"/>
</dbReference>
<dbReference type="FunCoup" id="Q9BTE1">
    <property type="interactions" value="3486"/>
</dbReference>
<dbReference type="IntAct" id="Q9BTE1">
    <property type="interactions" value="58"/>
</dbReference>
<dbReference type="MINT" id="Q9BTE1"/>
<dbReference type="STRING" id="9606.ENSP00000300087"/>
<dbReference type="GlyGen" id="Q9BTE1">
    <property type="glycosylation" value="1 site, 1 O-linked glycan (1 site)"/>
</dbReference>
<dbReference type="iPTMnet" id="Q9BTE1"/>
<dbReference type="PhosphoSitePlus" id="Q9BTE1"/>
<dbReference type="BioMuta" id="DCTN5"/>
<dbReference type="DMDM" id="62900103"/>
<dbReference type="jPOST" id="Q9BTE1"/>
<dbReference type="MassIVE" id="Q9BTE1"/>
<dbReference type="PaxDb" id="9606-ENSP00000300087"/>
<dbReference type="PeptideAtlas" id="Q9BTE1"/>
<dbReference type="ProteomicsDB" id="41095"/>
<dbReference type="ProteomicsDB" id="41730"/>
<dbReference type="ProteomicsDB" id="78981">
    <molecule id="Q9BTE1-1"/>
</dbReference>
<dbReference type="Pumba" id="Q9BTE1"/>
<dbReference type="Antibodypedia" id="43088">
    <property type="antibodies" value="94 antibodies from 20 providers"/>
</dbReference>
<dbReference type="DNASU" id="84516"/>
<dbReference type="Ensembl" id="ENST00000300087.7">
    <molecule id="Q9BTE1-1"/>
    <property type="protein sequence ID" value="ENSP00000300087.2"/>
    <property type="gene ID" value="ENSG00000166847.10"/>
</dbReference>
<dbReference type="Ensembl" id="ENST00000563998.5">
    <molecule id="Q9BTE1-2"/>
    <property type="protein sequence ID" value="ENSP00000454691.1"/>
    <property type="gene ID" value="ENSG00000166847.10"/>
</dbReference>
<dbReference type="Ensembl" id="ENST00000568272.1">
    <molecule id="Q9BTE1-3"/>
    <property type="protein sequence ID" value="ENSP00000455685.1"/>
    <property type="gene ID" value="ENSG00000166847.10"/>
</dbReference>
<dbReference type="GeneID" id="84516"/>
<dbReference type="KEGG" id="hsa:84516"/>
<dbReference type="MANE-Select" id="ENST00000300087.7">
    <property type="protein sequence ID" value="ENSP00000300087.2"/>
    <property type="RefSeq nucleotide sequence ID" value="NM_032486.4"/>
    <property type="RefSeq protein sequence ID" value="NP_115875.1"/>
</dbReference>
<dbReference type="UCSC" id="uc002dly.3">
    <molecule id="Q9BTE1-1"/>
    <property type="organism name" value="human"/>
</dbReference>
<dbReference type="AGR" id="HGNC:24594"/>
<dbReference type="CTD" id="84516"/>
<dbReference type="DisGeNET" id="84516"/>
<dbReference type="GeneCards" id="DCTN5"/>
<dbReference type="HGNC" id="HGNC:24594">
    <property type="gene designation" value="DCTN5"/>
</dbReference>
<dbReference type="HPA" id="ENSG00000166847">
    <property type="expression patterns" value="Low tissue specificity"/>
</dbReference>
<dbReference type="MalaCards" id="DCTN5"/>
<dbReference type="MIM" id="612962">
    <property type="type" value="gene"/>
</dbReference>
<dbReference type="neXtProt" id="NX_Q9BTE1"/>
<dbReference type="OpenTargets" id="ENSG00000166847"/>
<dbReference type="PharmGKB" id="PA142672007"/>
<dbReference type="VEuPathDB" id="HostDB:ENSG00000166847"/>
<dbReference type="eggNOG" id="KOG3121">
    <property type="taxonomic scope" value="Eukaryota"/>
</dbReference>
<dbReference type="GeneTree" id="ENSGT00390000015360"/>
<dbReference type="HOGENOM" id="CLU_088622_2_0_1"/>
<dbReference type="InParanoid" id="Q9BTE1"/>
<dbReference type="OMA" id="SQIHGTQ"/>
<dbReference type="OrthoDB" id="417208at2759"/>
<dbReference type="PAN-GO" id="Q9BTE1">
    <property type="GO annotations" value="1 GO annotation based on evolutionary models"/>
</dbReference>
<dbReference type="PhylomeDB" id="Q9BTE1"/>
<dbReference type="TreeFam" id="TF314194"/>
<dbReference type="PathwayCommons" id="Q9BTE1"/>
<dbReference type="Reactome" id="R-HSA-2132295">
    <property type="pathway name" value="MHC class II antigen presentation"/>
</dbReference>
<dbReference type="Reactome" id="R-HSA-3371497">
    <property type="pathway name" value="HSP90 chaperone cycle for steroid hormone receptors (SHR) in the presence of ligand"/>
</dbReference>
<dbReference type="Reactome" id="R-HSA-6807878">
    <property type="pathway name" value="COPI-mediated anterograde transport"/>
</dbReference>
<dbReference type="Reactome" id="R-HSA-6811436">
    <property type="pathway name" value="COPI-independent Golgi-to-ER retrograde traffic"/>
</dbReference>
<dbReference type="SignaLink" id="Q9BTE1"/>
<dbReference type="BioGRID-ORCS" id="84516">
    <property type="hits" value="783 hits in 1157 CRISPR screens"/>
</dbReference>
<dbReference type="ChiTaRS" id="DCTN5">
    <property type="organism name" value="human"/>
</dbReference>
<dbReference type="GeneWiki" id="DCTN5"/>
<dbReference type="GenomeRNAi" id="84516"/>
<dbReference type="Pharos" id="Q9BTE1">
    <property type="development level" value="Tbio"/>
</dbReference>
<dbReference type="PRO" id="PR:Q9BTE1"/>
<dbReference type="Proteomes" id="UP000005640">
    <property type="component" value="Chromosome 16"/>
</dbReference>
<dbReference type="RNAct" id="Q9BTE1">
    <property type="molecule type" value="protein"/>
</dbReference>
<dbReference type="Bgee" id="ENSG00000166847">
    <property type="expression patterns" value="Expressed in islet of Langerhans and 201 other cell types or tissues"/>
</dbReference>
<dbReference type="ExpressionAtlas" id="Q9BTE1">
    <property type="expression patterns" value="baseline and differential"/>
</dbReference>
<dbReference type="GO" id="GO:0005813">
    <property type="term" value="C:centrosome"/>
    <property type="evidence" value="ECO:0000314"/>
    <property type="project" value="UniProtKB"/>
</dbReference>
<dbReference type="GO" id="GO:0005829">
    <property type="term" value="C:cytosol"/>
    <property type="evidence" value="ECO:0000304"/>
    <property type="project" value="Reactome"/>
</dbReference>
<dbReference type="GO" id="GO:0005869">
    <property type="term" value="C:dynactin complex"/>
    <property type="evidence" value="ECO:0000318"/>
    <property type="project" value="GO_Central"/>
</dbReference>
<dbReference type="GO" id="GO:0000776">
    <property type="term" value="C:kinetochore"/>
    <property type="evidence" value="ECO:0007669"/>
    <property type="project" value="UniProtKB-KW"/>
</dbReference>
<dbReference type="GO" id="GO:0031965">
    <property type="term" value="C:nuclear membrane"/>
    <property type="evidence" value="ECO:0000314"/>
    <property type="project" value="HPA"/>
</dbReference>
<dbReference type="GO" id="GO:0005654">
    <property type="term" value="C:nucleoplasm"/>
    <property type="evidence" value="ECO:0000314"/>
    <property type="project" value="HPA"/>
</dbReference>
<dbReference type="GO" id="GO:0035904">
    <property type="term" value="P:aorta development"/>
    <property type="evidence" value="ECO:0007669"/>
    <property type="project" value="Ensembl"/>
</dbReference>
<dbReference type="GO" id="GO:0060976">
    <property type="term" value="P:coronary vasculature development"/>
    <property type="evidence" value="ECO:0007669"/>
    <property type="project" value="Ensembl"/>
</dbReference>
<dbReference type="GO" id="GO:0003281">
    <property type="term" value="P:ventricular septum development"/>
    <property type="evidence" value="ECO:0007669"/>
    <property type="project" value="Ensembl"/>
</dbReference>
<dbReference type="CDD" id="cd03359">
    <property type="entry name" value="LbH_Dynactin_5"/>
    <property type="match status" value="1"/>
</dbReference>
<dbReference type="FunFam" id="2.160.10.10:FF:000014">
    <property type="entry name" value="dynactin subunit 5"/>
    <property type="match status" value="1"/>
</dbReference>
<dbReference type="Gene3D" id="2.160.10.10">
    <property type="entry name" value="Hexapeptide repeat proteins"/>
    <property type="match status" value="1"/>
</dbReference>
<dbReference type="InterPro" id="IPR047125">
    <property type="entry name" value="DCTN5"/>
</dbReference>
<dbReference type="InterPro" id="IPR011004">
    <property type="entry name" value="Trimer_LpxA-like_sf"/>
</dbReference>
<dbReference type="PANTHER" id="PTHR46126">
    <property type="entry name" value="DYNACTIN SUBUNIT 5"/>
    <property type="match status" value="1"/>
</dbReference>
<dbReference type="PANTHER" id="PTHR46126:SF1">
    <property type="entry name" value="DYNACTIN SUBUNIT 5"/>
    <property type="match status" value="1"/>
</dbReference>
<dbReference type="Pfam" id="PF21711">
    <property type="entry name" value="DCTN5"/>
    <property type="match status" value="1"/>
</dbReference>
<dbReference type="SUPFAM" id="SSF51161">
    <property type="entry name" value="Trimeric LpxA-like enzymes"/>
    <property type="match status" value="1"/>
</dbReference>
<feature type="chain" id="PRO_0000079827" description="Dynactin subunit 5">
    <location>
        <begin position="1"/>
        <end position="182"/>
    </location>
</feature>
<feature type="modified residue" description="N-acetylmethionine" evidence="7 8">
    <location>
        <position position="1"/>
    </location>
</feature>
<feature type="splice variant" id="VSP_046697" description="In isoform 3." evidence="5">
    <original>TIVMNDCIIRGDLANVRVGRHCVVKSRSVIRPPFKKFSKGVAFFPLHIGDHVFIEEDCVVNAAQIGSYVHVGKNCVIGRRCVLKDCCKILDNTVLPPETVVPPFTVFSGCPGLFSGELPECTQELMIDVTKSYYQKFLPLTQV</original>
    <variation>NFVISVFLSPYIRCHSACRDRKRSDESVRLSVNNREWWGLVNWRM</variation>
    <location>
        <begin position="40"/>
        <end position="182"/>
    </location>
</feature>
<feature type="splice variant" id="VSP_046023" description="In isoform 2." evidence="4">
    <original>GLFSGELPECTQELMIDVTKSYYQKFLPLTQV</original>
    <variation>AP</variation>
    <location>
        <begin position="151"/>
        <end position="182"/>
    </location>
</feature>
<gene>
    <name evidence="6" type="primary">DCTN5</name>
</gene>
<organism>
    <name type="scientific">Homo sapiens</name>
    <name type="common">Human</name>
    <dbReference type="NCBI Taxonomy" id="9606"/>
    <lineage>
        <taxon>Eukaryota</taxon>
        <taxon>Metazoa</taxon>
        <taxon>Chordata</taxon>
        <taxon>Craniata</taxon>
        <taxon>Vertebrata</taxon>
        <taxon>Euteleostomi</taxon>
        <taxon>Mammalia</taxon>
        <taxon>Eutheria</taxon>
        <taxon>Euarchontoglires</taxon>
        <taxon>Primates</taxon>
        <taxon>Haplorrhini</taxon>
        <taxon>Catarrhini</taxon>
        <taxon>Hominidae</taxon>
        <taxon>Homo</taxon>
    </lineage>
</organism>